<gene>
    <name evidence="1" type="primary">ubiB</name>
    <name type="ordered locus">SPAB_04928</name>
</gene>
<comment type="function">
    <text evidence="1">Is probably a protein kinase regulator of UbiI activity which is involved in aerobic coenzyme Q (ubiquinone) biosynthesis.</text>
</comment>
<comment type="pathway">
    <text>Cofactor biosynthesis; ubiquinone biosynthesis [regulation].</text>
</comment>
<comment type="subcellular location">
    <subcellularLocation>
        <location evidence="1">Cell inner membrane</location>
        <topology evidence="1">Multi-pass membrane protein</topology>
    </subcellularLocation>
</comment>
<comment type="similarity">
    <text evidence="1">Belongs to the ABC1 family. UbiB subfamily.</text>
</comment>
<accession>A9MY99</accession>
<organism>
    <name type="scientific">Salmonella paratyphi B (strain ATCC BAA-1250 / SPB7)</name>
    <dbReference type="NCBI Taxonomy" id="1016998"/>
    <lineage>
        <taxon>Bacteria</taxon>
        <taxon>Pseudomonadati</taxon>
        <taxon>Pseudomonadota</taxon>
        <taxon>Gammaproteobacteria</taxon>
        <taxon>Enterobacterales</taxon>
        <taxon>Enterobacteriaceae</taxon>
        <taxon>Salmonella</taxon>
    </lineage>
</organism>
<name>UBIB_SALPB</name>
<sequence>MTPGEVRRLYFIIRTFLSYGLDELIPRMRLTLPLRLWRYSLFWMPNRHKDKLLGERLRLALQELGPVWIKFGQMLSTRRDLFPPQIADQLALLQDKVAPFDGRLAKAQIEEAMGGLPVEAWFDDFDIQPLASASIAQVHTARLKSNGKEVVIKVIRPDILPVIQADLKLIYRLARWVPRLLPDGRRLRPTEVVREYEKTLIDELNLLRESANAIQLRRNFENSPMLYIPEVYSDYCSQNMMVMERIYGIPVSDVAALEKNGTNMKLLAERGVKVFFTQVFRDSFFHADMHPGNIFVSHEHPENPQYIGIDCGIVGSLNKEDKRYLAENFIAFFNRDYRKVAELHVDSGWVPPDTNVEDFEFAIRTVCEPIFEKPLAEISFGHVLLNLFNTARRFNMEVQPQLVLLQKTLLYVEGVGRQLYPQLDLWKTAKPFLESWIKDQVGIPALTRALKEKAPFWVEKMPEIPELVYDSLRQGKYLQHSVDKIARELQVNHVRQSQSRYLLGIGATLLLSGSFLLVNRPEWGLMPGWLMVGGVVVWLVGWRKTR</sequence>
<keyword id="KW-0067">ATP-binding</keyword>
<keyword id="KW-0997">Cell inner membrane</keyword>
<keyword id="KW-1003">Cell membrane</keyword>
<keyword id="KW-0418">Kinase</keyword>
<keyword id="KW-0472">Membrane</keyword>
<keyword id="KW-0547">Nucleotide-binding</keyword>
<keyword id="KW-0808">Transferase</keyword>
<keyword id="KW-0812">Transmembrane</keyword>
<keyword id="KW-1133">Transmembrane helix</keyword>
<keyword id="KW-0831">Ubiquinone biosynthesis</keyword>
<feature type="chain" id="PRO_1000080503" description="Probable protein kinase UbiB">
    <location>
        <begin position="1"/>
        <end position="546"/>
    </location>
</feature>
<feature type="transmembrane region" description="Helical" evidence="1">
    <location>
        <begin position="501"/>
        <end position="521"/>
    </location>
</feature>
<feature type="transmembrane region" description="Helical" evidence="1">
    <location>
        <begin position="522"/>
        <end position="542"/>
    </location>
</feature>
<feature type="domain" description="Protein kinase" evidence="1">
    <location>
        <begin position="124"/>
        <end position="502"/>
    </location>
</feature>
<feature type="active site" description="Proton acceptor" evidence="1">
    <location>
        <position position="288"/>
    </location>
</feature>
<feature type="binding site" evidence="1">
    <location>
        <begin position="130"/>
        <end position="138"/>
    </location>
    <ligand>
        <name>ATP</name>
        <dbReference type="ChEBI" id="CHEBI:30616"/>
    </ligand>
</feature>
<feature type="binding site" evidence="1">
    <location>
        <position position="153"/>
    </location>
    <ligand>
        <name>ATP</name>
        <dbReference type="ChEBI" id="CHEBI:30616"/>
    </ligand>
</feature>
<dbReference type="EC" id="2.7.-.-" evidence="1"/>
<dbReference type="EMBL" id="CP000886">
    <property type="protein sequence ID" value="ABX70227.1"/>
    <property type="molecule type" value="Genomic_DNA"/>
</dbReference>
<dbReference type="RefSeq" id="WP_000187559.1">
    <property type="nucleotide sequence ID" value="NC_010102.1"/>
</dbReference>
<dbReference type="SMR" id="A9MY99"/>
<dbReference type="KEGG" id="spq:SPAB_04928"/>
<dbReference type="PATRIC" id="fig|1016998.12.peg.4627"/>
<dbReference type="HOGENOM" id="CLU_006533_0_0_6"/>
<dbReference type="BioCyc" id="SENT1016998:SPAB_RS20040-MONOMER"/>
<dbReference type="UniPathway" id="UPA00232"/>
<dbReference type="Proteomes" id="UP000008556">
    <property type="component" value="Chromosome"/>
</dbReference>
<dbReference type="GO" id="GO:0005886">
    <property type="term" value="C:plasma membrane"/>
    <property type="evidence" value="ECO:0007669"/>
    <property type="project" value="UniProtKB-SubCell"/>
</dbReference>
<dbReference type="GO" id="GO:0005524">
    <property type="term" value="F:ATP binding"/>
    <property type="evidence" value="ECO:0007669"/>
    <property type="project" value="UniProtKB-KW"/>
</dbReference>
<dbReference type="GO" id="GO:0004672">
    <property type="term" value="F:protein kinase activity"/>
    <property type="evidence" value="ECO:0007669"/>
    <property type="project" value="UniProtKB-UniRule"/>
</dbReference>
<dbReference type="GO" id="GO:0010795">
    <property type="term" value="P:regulation of ubiquinone biosynthetic process"/>
    <property type="evidence" value="ECO:0007669"/>
    <property type="project" value="UniProtKB-UniRule"/>
</dbReference>
<dbReference type="GO" id="GO:0006744">
    <property type="term" value="P:ubiquinone biosynthetic process"/>
    <property type="evidence" value="ECO:0007669"/>
    <property type="project" value="UniProtKB-UniPathway"/>
</dbReference>
<dbReference type="CDD" id="cd13972">
    <property type="entry name" value="UbiB"/>
    <property type="match status" value="1"/>
</dbReference>
<dbReference type="HAMAP" id="MF_00414">
    <property type="entry name" value="UbiB"/>
    <property type="match status" value="1"/>
</dbReference>
<dbReference type="InterPro" id="IPR004147">
    <property type="entry name" value="ABC1_dom"/>
</dbReference>
<dbReference type="InterPro" id="IPR011009">
    <property type="entry name" value="Kinase-like_dom_sf"/>
</dbReference>
<dbReference type="InterPro" id="IPR010232">
    <property type="entry name" value="UbiB"/>
</dbReference>
<dbReference type="InterPro" id="IPR045308">
    <property type="entry name" value="UbiB_bact"/>
</dbReference>
<dbReference type="InterPro" id="IPR050154">
    <property type="entry name" value="UbiB_kinase"/>
</dbReference>
<dbReference type="NCBIfam" id="NF003404">
    <property type="entry name" value="PRK04750.1"/>
    <property type="match status" value="1"/>
</dbReference>
<dbReference type="NCBIfam" id="TIGR01982">
    <property type="entry name" value="UbiB"/>
    <property type="match status" value="1"/>
</dbReference>
<dbReference type="PANTHER" id="PTHR10566">
    <property type="entry name" value="CHAPERONE-ACTIVITY OF BC1 COMPLEX CABC1 -RELATED"/>
    <property type="match status" value="1"/>
</dbReference>
<dbReference type="PANTHER" id="PTHR10566:SF113">
    <property type="entry name" value="PROTEIN ACTIVITY OF BC1 COMPLEX KINASE 7, CHLOROPLASTIC"/>
    <property type="match status" value="1"/>
</dbReference>
<dbReference type="Pfam" id="PF03109">
    <property type="entry name" value="ABC1"/>
    <property type="match status" value="1"/>
</dbReference>
<dbReference type="SUPFAM" id="SSF56112">
    <property type="entry name" value="Protein kinase-like (PK-like)"/>
    <property type="match status" value="1"/>
</dbReference>
<evidence type="ECO:0000255" key="1">
    <source>
        <dbReference type="HAMAP-Rule" id="MF_00414"/>
    </source>
</evidence>
<protein>
    <recommendedName>
        <fullName evidence="1">Probable protein kinase UbiB</fullName>
        <ecNumber evidence="1">2.7.-.-</ecNumber>
    </recommendedName>
    <alternativeName>
        <fullName evidence="1">Ubiquinone biosynthesis protein UbiB</fullName>
    </alternativeName>
</protein>
<reference key="1">
    <citation type="submission" date="2007-11" db="EMBL/GenBank/DDBJ databases">
        <authorList>
            <consortium name="The Salmonella enterica serovar Paratyphi B Genome Sequencing Project"/>
            <person name="McClelland M."/>
            <person name="Sanderson E.K."/>
            <person name="Porwollik S."/>
            <person name="Spieth J."/>
            <person name="Clifton W.S."/>
            <person name="Fulton R."/>
            <person name="Cordes M."/>
            <person name="Wollam A."/>
            <person name="Shah N."/>
            <person name="Pepin K."/>
            <person name="Bhonagiri V."/>
            <person name="Nash W."/>
            <person name="Johnson M."/>
            <person name="Thiruvilangam P."/>
            <person name="Wilson R."/>
        </authorList>
    </citation>
    <scope>NUCLEOTIDE SEQUENCE [LARGE SCALE GENOMIC DNA]</scope>
    <source>
        <strain>ATCC BAA-1250 / SPB7</strain>
    </source>
</reference>
<proteinExistence type="inferred from homology"/>